<protein>
    <recommendedName>
        <fullName>Putative ankyrin repeat protein FPV216</fullName>
    </recommendedName>
</protein>
<keyword id="KW-0040">ANK repeat</keyword>
<keyword id="KW-1185">Reference proteome</keyword>
<keyword id="KW-0677">Repeat</keyword>
<feature type="chain" id="PRO_0000067113" description="Putative ankyrin repeat protein FPV216">
    <location>
        <begin position="1"/>
        <end position="296"/>
    </location>
</feature>
<feature type="repeat" description="ANK 1">
    <location>
        <begin position="73"/>
        <end position="102"/>
    </location>
</feature>
<feature type="repeat" description="ANK 2">
    <location>
        <begin position="107"/>
        <end position="136"/>
    </location>
</feature>
<proteinExistence type="predicted"/>
<reference key="1">
    <citation type="journal article" date="2000" name="J. Virol.">
        <title>The genome of fowlpox virus.</title>
        <authorList>
            <person name="Afonso C.L."/>
            <person name="Tulman E.R."/>
            <person name="Lu Z."/>
            <person name="Zsak L."/>
            <person name="Kutish G.F."/>
            <person name="Rock D.L."/>
        </authorList>
    </citation>
    <scope>NUCLEOTIDE SEQUENCE [LARGE SCALE GENOMIC DNA]</scope>
</reference>
<gene>
    <name type="ordered locus">FPV216</name>
</gene>
<organism>
    <name type="scientific">Fowlpox virus (strain NVSL)</name>
    <name type="common">FPV</name>
    <dbReference type="NCBI Taxonomy" id="928301"/>
    <lineage>
        <taxon>Viruses</taxon>
        <taxon>Varidnaviria</taxon>
        <taxon>Bamfordvirae</taxon>
        <taxon>Nucleocytoviricota</taxon>
        <taxon>Pokkesviricetes</taxon>
        <taxon>Chitovirales</taxon>
        <taxon>Poxviridae</taxon>
        <taxon>Chordopoxvirinae</taxon>
        <taxon>Avipoxvirus</taxon>
        <taxon>Fowlpox virus</taxon>
    </lineage>
</organism>
<accession>Q9J519</accession>
<dbReference type="EMBL" id="AF198100">
    <property type="protein sequence ID" value="AAF44560.1"/>
    <property type="molecule type" value="Genomic_DNA"/>
</dbReference>
<dbReference type="RefSeq" id="NP_039179.1">
    <property type="nucleotide sequence ID" value="NC_002188.1"/>
</dbReference>
<dbReference type="SMR" id="Q9J519"/>
<dbReference type="GeneID" id="1486788"/>
<dbReference type="KEGG" id="vg:1486788"/>
<dbReference type="Proteomes" id="UP000008597">
    <property type="component" value="Segment"/>
</dbReference>
<dbReference type="Gene3D" id="1.25.40.20">
    <property type="entry name" value="Ankyrin repeat-containing domain"/>
    <property type="match status" value="1"/>
</dbReference>
<dbReference type="InterPro" id="IPR002110">
    <property type="entry name" value="Ankyrin_rpt"/>
</dbReference>
<dbReference type="InterPro" id="IPR036770">
    <property type="entry name" value="Ankyrin_rpt-contain_sf"/>
</dbReference>
<dbReference type="PANTHER" id="PTHR24198">
    <property type="entry name" value="ANKYRIN REPEAT AND PROTEIN KINASE DOMAIN-CONTAINING PROTEIN"/>
    <property type="match status" value="1"/>
</dbReference>
<dbReference type="PANTHER" id="PTHR24198:SF165">
    <property type="entry name" value="ANKYRIN REPEAT-CONTAINING PROTEIN-RELATED"/>
    <property type="match status" value="1"/>
</dbReference>
<dbReference type="Pfam" id="PF12796">
    <property type="entry name" value="Ank_2"/>
    <property type="match status" value="1"/>
</dbReference>
<dbReference type="SMART" id="SM00248">
    <property type="entry name" value="ANK"/>
    <property type="match status" value="3"/>
</dbReference>
<dbReference type="SUPFAM" id="SSF48403">
    <property type="entry name" value="Ankyrin repeat"/>
    <property type="match status" value="1"/>
</dbReference>
<dbReference type="PROSITE" id="PS50297">
    <property type="entry name" value="ANK_REP_REGION"/>
    <property type="match status" value="1"/>
</dbReference>
<dbReference type="PROSITE" id="PS50088">
    <property type="entry name" value="ANK_REPEAT"/>
    <property type="match status" value="1"/>
</dbReference>
<name>V216_FOWPN</name>
<organismHost>
    <name type="scientific">Vertebrata</name>
    <dbReference type="NCBI Taxonomy" id="7742"/>
</organismHost>
<sequence length="296" mass="34298">MSITSIINNLIDIITLYIRIFYVIYYIAIKSKNQICIANILYTSIKFYYTDIIDAVLKRGIDPNIPFPLSENSYVNPLIYAIECDNHDAILSLIRYGADVNTYSNYLVITPLYISVLHGCPKCVEILLYYGANINIVTYKMVTPIELASRICYNNLAFMVCDRTITNIPKKITYNFEIMKILVSHFILQASNDRLNNRHNKYFSEGYNKNKMLVSTSIILTYFKKQCIEDIDIMKNIKLGDDSFLDILVERNTMKLSTYISNQDILDIPKTVKVYNTRINMLLDEAIIYNNINIIL</sequence>